<name>S39AB_RAT</name>
<proteinExistence type="evidence at transcript level"/>
<accession>Q6P6S2</accession>
<reference key="1">
    <citation type="journal article" date="2004" name="Genome Res.">
        <title>The status, quality, and expansion of the NIH full-length cDNA project: the Mammalian Gene Collection (MGC).</title>
        <authorList>
            <consortium name="The MGC Project Team"/>
        </authorList>
    </citation>
    <scope>NUCLEOTIDE SEQUENCE [LARGE SCALE MRNA]</scope>
    <source>
        <tissue>Prostate</tissue>
    </source>
</reference>
<dbReference type="EMBL" id="BC062054">
    <property type="protein sequence ID" value="AAH62054.1"/>
    <property type="molecule type" value="mRNA"/>
</dbReference>
<dbReference type="RefSeq" id="NP_001013060.1">
    <property type="nucleotide sequence ID" value="NM_001013042.2"/>
</dbReference>
<dbReference type="RefSeq" id="XP_063124836.1">
    <property type="nucleotide sequence ID" value="XM_063268766.1"/>
</dbReference>
<dbReference type="SMR" id="Q6P6S2"/>
<dbReference type="FunCoup" id="Q6P6S2">
    <property type="interactions" value="323"/>
</dbReference>
<dbReference type="STRING" id="10116.ENSRNOP00000039028"/>
<dbReference type="PhosphoSitePlus" id="Q6P6S2"/>
<dbReference type="PaxDb" id="10116-ENSRNOP00000039028"/>
<dbReference type="Ensembl" id="ENSRNOT00000097833.1">
    <property type="protein sequence ID" value="ENSRNOP00000091972.1"/>
    <property type="gene ID" value="ENSRNOG00000031213.6"/>
</dbReference>
<dbReference type="GeneID" id="287796"/>
<dbReference type="KEGG" id="rno:287796"/>
<dbReference type="AGR" id="RGD:1311981"/>
<dbReference type="CTD" id="201266"/>
<dbReference type="RGD" id="1311981">
    <property type="gene designation" value="Slc39a11"/>
</dbReference>
<dbReference type="eggNOG" id="KOG2474">
    <property type="taxonomic scope" value="Eukaryota"/>
</dbReference>
<dbReference type="GeneTree" id="ENSGT00390000006167"/>
<dbReference type="HOGENOM" id="CLU_015114_1_1_1"/>
<dbReference type="InParanoid" id="Q6P6S2"/>
<dbReference type="PhylomeDB" id="Q6P6S2"/>
<dbReference type="PRO" id="PR:Q6P6S2"/>
<dbReference type="Proteomes" id="UP000002494">
    <property type="component" value="Chromosome 10"/>
</dbReference>
<dbReference type="Bgee" id="ENSRNOG00000031213">
    <property type="expression patterns" value="Expressed in pancreas and 20 other cell types or tissues"/>
</dbReference>
<dbReference type="GO" id="GO:0005737">
    <property type="term" value="C:cytoplasm"/>
    <property type="evidence" value="ECO:0000250"/>
    <property type="project" value="UniProtKB"/>
</dbReference>
<dbReference type="GO" id="GO:0005794">
    <property type="term" value="C:Golgi apparatus"/>
    <property type="evidence" value="ECO:0000250"/>
    <property type="project" value="UniProtKB"/>
</dbReference>
<dbReference type="GO" id="GO:0016020">
    <property type="term" value="C:membrane"/>
    <property type="evidence" value="ECO:0000318"/>
    <property type="project" value="GO_Central"/>
</dbReference>
<dbReference type="GO" id="GO:0005634">
    <property type="term" value="C:nucleus"/>
    <property type="evidence" value="ECO:0000250"/>
    <property type="project" value="UniProtKB"/>
</dbReference>
<dbReference type="GO" id="GO:0005886">
    <property type="term" value="C:plasma membrane"/>
    <property type="evidence" value="ECO:0000250"/>
    <property type="project" value="UniProtKB"/>
</dbReference>
<dbReference type="GO" id="GO:0005375">
    <property type="term" value="F:copper ion transmembrane transporter activity"/>
    <property type="evidence" value="ECO:0000250"/>
    <property type="project" value="UniProtKB"/>
</dbReference>
<dbReference type="GO" id="GO:0005385">
    <property type="term" value="F:zinc ion transmembrane transporter activity"/>
    <property type="evidence" value="ECO:0000250"/>
    <property type="project" value="UniProtKB"/>
</dbReference>
<dbReference type="GO" id="GO:0071578">
    <property type="term" value="P:zinc ion import across plasma membrane"/>
    <property type="evidence" value="ECO:0000266"/>
    <property type="project" value="RGD"/>
</dbReference>
<dbReference type="GO" id="GO:0071577">
    <property type="term" value="P:zinc ion transmembrane transport"/>
    <property type="evidence" value="ECO:0000318"/>
    <property type="project" value="GO_Central"/>
</dbReference>
<dbReference type="InterPro" id="IPR003689">
    <property type="entry name" value="ZIP"/>
</dbReference>
<dbReference type="PANTHER" id="PTHR11040:SF211">
    <property type="entry name" value="ZINC TRANSPORTER ZIP11"/>
    <property type="match status" value="1"/>
</dbReference>
<dbReference type="PANTHER" id="PTHR11040">
    <property type="entry name" value="ZINC/IRON TRANSPORTER"/>
    <property type="match status" value="1"/>
</dbReference>
<dbReference type="Pfam" id="PF02535">
    <property type="entry name" value="Zip"/>
    <property type="match status" value="1"/>
</dbReference>
<evidence type="ECO:0000250" key="1">
    <source>
        <dbReference type="UniProtKB" id="Q8BWY7"/>
    </source>
</evidence>
<evidence type="ECO:0000255" key="2"/>
<evidence type="ECO:0000305" key="3"/>
<gene>
    <name type="primary">Slc39a11</name>
    <name type="synonym">Zip11</name>
</gene>
<protein>
    <recommendedName>
        <fullName>Zinc transporter ZIP11</fullName>
    </recommendedName>
    <alternativeName>
        <fullName>Solute carrier family 39 member 11</fullName>
    </alternativeName>
    <alternativeName>
        <fullName>Zrt- and Irt-like protein 11</fullName>
        <shortName>ZIP-11</shortName>
    </alternativeName>
</protein>
<sequence length="335" mass="34868">MLQGYSSVSQALLGTFFTWAMTAAGAALVFIFSSGQRRILDGSLGFAAGVMLAASYWSLLAPAVEMATSSGGFGAFAFFPVAVGFTLGAAFVYLADLLMPHLGAGEDPQTALALNLDPALVKKSDLKDPASLLFPERELSIRIDKRENGEVYQRKKLAATDFPEGAAPSGPVHGNSGQPGVSSWRRIALLILAITIHNIPEGLAVGVGFGAVEKTASATFESARNLAIGIGIQNFPEGLAVSLPLRGAGFSTWKAFWYGQLSGMVEPLAGVFGAFAVVLAEPVLPYALAFAAGAMVYVVMDDIIPEAQISGNGKLASWASILGFVVMMSLDVGLG</sequence>
<keyword id="KW-1003">Cell membrane</keyword>
<keyword id="KW-0963">Cytoplasm</keyword>
<keyword id="KW-0333">Golgi apparatus</keyword>
<keyword id="KW-0406">Ion transport</keyword>
<keyword id="KW-0472">Membrane</keyword>
<keyword id="KW-0539">Nucleus</keyword>
<keyword id="KW-1185">Reference proteome</keyword>
<keyword id="KW-0812">Transmembrane</keyword>
<keyword id="KW-1133">Transmembrane helix</keyword>
<keyword id="KW-0813">Transport</keyword>
<keyword id="KW-0862">Zinc</keyword>
<keyword id="KW-0864">Zinc transport</keyword>
<organism>
    <name type="scientific">Rattus norvegicus</name>
    <name type="common">Rat</name>
    <dbReference type="NCBI Taxonomy" id="10116"/>
    <lineage>
        <taxon>Eukaryota</taxon>
        <taxon>Metazoa</taxon>
        <taxon>Chordata</taxon>
        <taxon>Craniata</taxon>
        <taxon>Vertebrata</taxon>
        <taxon>Euteleostomi</taxon>
        <taxon>Mammalia</taxon>
        <taxon>Eutheria</taxon>
        <taxon>Euarchontoglires</taxon>
        <taxon>Glires</taxon>
        <taxon>Rodentia</taxon>
        <taxon>Myomorpha</taxon>
        <taxon>Muroidea</taxon>
        <taxon>Muridae</taxon>
        <taxon>Murinae</taxon>
        <taxon>Rattus</taxon>
    </lineage>
</organism>
<comment type="function">
    <text evidence="1">Zinc importer that regulates cytosolic zinc concentrations either via zinc influx from the extracellular compartment or efflux from intracellular organelles such as Golgi apparatus. May transport copper ions as well. The transport mechanism remains to be elucidated.</text>
</comment>
<comment type="catalytic activity">
    <reaction evidence="1">
        <text>Zn(2+)(in) = Zn(2+)(out)</text>
        <dbReference type="Rhea" id="RHEA:29351"/>
        <dbReference type="ChEBI" id="CHEBI:29105"/>
    </reaction>
    <physiologicalReaction direction="right-to-left" evidence="1">
        <dbReference type="Rhea" id="RHEA:29353"/>
    </physiologicalReaction>
</comment>
<comment type="catalytic activity">
    <reaction evidence="1">
        <text>Cu(2+)(in) = Cu(2+)(out)</text>
        <dbReference type="Rhea" id="RHEA:28703"/>
        <dbReference type="ChEBI" id="CHEBI:29036"/>
    </reaction>
    <physiologicalReaction direction="right-to-left" evidence="1">
        <dbReference type="Rhea" id="RHEA:28705"/>
    </physiologicalReaction>
</comment>
<comment type="subcellular location">
    <subcellularLocation>
        <location evidence="1">Cell membrane</location>
        <topology evidence="3">Multi-pass membrane protein</topology>
    </subcellularLocation>
    <subcellularLocation>
        <location evidence="1">Nucleus</location>
    </subcellularLocation>
    <subcellularLocation>
        <location evidence="1">Cytoplasm</location>
    </subcellularLocation>
    <subcellularLocation>
        <location evidence="1">Golgi apparatus</location>
    </subcellularLocation>
</comment>
<comment type="similarity">
    <text evidence="3">Belongs to the ZIP transporter (TC 2.A.5) family.</text>
</comment>
<feature type="chain" id="PRO_0000308412" description="Zinc transporter ZIP11">
    <location>
        <begin position="1"/>
        <end position="335"/>
    </location>
</feature>
<feature type="transmembrane region" description="Helical" evidence="2">
    <location>
        <begin position="12"/>
        <end position="32"/>
    </location>
</feature>
<feature type="transmembrane region" description="Helical" evidence="2">
    <location>
        <begin position="44"/>
        <end position="64"/>
    </location>
</feature>
<feature type="transmembrane region" description="Helical" evidence="2">
    <location>
        <begin position="72"/>
        <end position="92"/>
    </location>
</feature>
<feature type="transmembrane region" description="Helical" evidence="2">
    <location>
        <begin position="187"/>
        <end position="207"/>
    </location>
</feature>
<feature type="transmembrane region" description="Helical" evidence="2">
    <location>
        <begin position="256"/>
        <end position="278"/>
    </location>
</feature>
<feature type="transmembrane region" description="Helical" evidence="2">
    <location>
        <begin position="283"/>
        <end position="300"/>
    </location>
</feature>
<feature type="transmembrane region" description="Helical" evidence="2">
    <location>
        <begin position="315"/>
        <end position="335"/>
    </location>
</feature>